<dbReference type="EC" id="2.3.2.27" evidence="3"/>
<dbReference type="EMBL" id="CM000128">
    <property type="protein sequence ID" value="EAY91216.1"/>
    <property type="molecule type" value="Genomic_DNA"/>
</dbReference>
<dbReference type="SMR" id="A2XK56"/>
<dbReference type="STRING" id="39946.A2XK56"/>
<dbReference type="EnsemblPlants" id="BGIOSGA010138-TA">
    <property type="protein sequence ID" value="BGIOSGA010138-PA"/>
    <property type="gene ID" value="BGIOSGA010138"/>
</dbReference>
<dbReference type="EnsemblPlants" id="OsGoSa_03g0027980.01">
    <property type="protein sequence ID" value="OsGoSa_03g0027980.01"/>
    <property type="gene ID" value="OsGoSa_03g0027980"/>
</dbReference>
<dbReference type="EnsemblPlants" id="OsLaMu_03g0027710.01">
    <property type="protein sequence ID" value="OsLaMu_03g0027710.01"/>
    <property type="gene ID" value="OsLaMu_03g0027710"/>
</dbReference>
<dbReference type="EnsemblPlants" id="OsLiXu_03g0027770.01">
    <property type="protein sequence ID" value="OsLiXu_03g0027770.01"/>
    <property type="gene ID" value="OsLiXu_03g0027770"/>
</dbReference>
<dbReference type="EnsemblPlants" id="OsPr106_03g0027850.01">
    <property type="protein sequence ID" value="OsPr106_03g0027850.01"/>
    <property type="gene ID" value="OsPr106_03g0027850"/>
</dbReference>
<dbReference type="EnsemblPlants" id="OsZS97_03G027850_01">
    <property type="protein sequence ID" value="OsZS97_03G027850_01"/>
    <property type="gene ID" value="OsZS97_03G027850"/>
</dbReference>
<dbReference type="EnsemblPlants" id="OsZS97_03G027850_05">
    <property type="protein sequence ID" value="OsZS97_03G027850_05"/>
    <property type="gene ID" value="OsZS97_03G027850"/>
</dbReference>
<dbReference type="Gramene" id="BGIOSGA010138-TA">
    <property type="protein sequence ID" value="BGIOSGA010138-PA"/>
    <property type="gene ID" value="BGIOSGA010138"/>
</dbReference>
<dbReference type="Gramene" id="OsGoSa_03g0027980.01">
    <property type="protein sequence ID" value="OsGoSa_03g0027980.01"/>
    <property type="gene ID" value="OsGoSa_03g0027980"/>
</dbReference>
<dbReference type="Gramene" id="OsLaMu_03g0027710.01">
    <property type="protein sequence ID" value="OsLaMu_03g0027710.01"/>
    <property type="gene ID" value="OsLaMu_03g0027710"/>
</dbReference>
<dbReference type="Gramene" id="OsLiXu_03g0027770.01">
    <property type="protein sequence ID" value="OsLiXu_03g0027770.01"/>
    <property type="gene ID" value="OsLiXu_03g0027770"/>
</dbReference>
<dbReference type="Gramene" id="OsPr106_03g0027850.01">
    <property type="protein sequence ID" value="OsPr106_03g0027850.01"/>
    <property type="gene ID" value="OsPr106_03g0027850"/>
</dbReference>
<dbReference type="Gramene" id="OsZS97_03G027850_01">
    <property type="protein sequence ID" value="OsZS97_03G027850_01"/>
    <property type="gene ID" value="OsZS97_03G027850"/>
</dbReference>
<dbReference type="Gramene" id="OsZS97_03G027850_05">
    <property type="protein sequence ID" value="OsZS97_03G027850_05"/>
    <property type="gene ID" value="OsZS97_03G027850"/>
</dbReference>
<dbReference type="HOGENOM" id="CLU_058131_0_0_1"/>
<dbReference type="OMA" id="LCQCQSC"/>
<dbReference type="OrthoDB" id="6105938at2759"/>
<dbReference type="UniPathway" id="UPA00143"/>
<dbReference type="Proteomes" id="UP000007015">
    <property type="component" value="Chromosome 3"/>
</dbReference>
<dbReference type="GO" id="GO:0016740">
    <property type="term" value="F:transferase activity"/>
    <property type="evidence" value="ECO:0007669"/>
    <property type="project" value="UniProtKB-KW"/>
</dbReference>
<dbReference type="GO" id="GO:0008270">
    <property type="term" value="F:zinc ion binding"/>
    <property type="evidence" value="ECO:0007669"/>
    <property type="project" value="UniProtKB-KW"/>
</dbReference>
<dbReference type="GO" id="GO:0016567">
    <property type="term" value="P:protein ubiquitination"/>
    <property type="evidence" value="ECO:0007669"/>
    <property type="project" value="UniProtKB-UniPathway"/>
</dbReference>
<dbReference type="CDD" id="cd23127">
    <property type="entry name" value="RING-HC_BAH1-like"/>
    <property type="match status" value="1"/>
</dbReference>
<dbReference type="CDD" id="cd14482">
    <property type="entry name" value="SPX_BAH1-like"/>
    <property type="match status" value="1"/>
</dbReference>
<dbReference type="Gene3D" id="3.30.40.10">
    <property type="entry name" value="Zinc/RING finger domain, C3HC4 (zinc finger)"/>
    <property type="match status" value="1"/>
</dbReference>
<dbReference type="InterPro" id="IPR033326">
    <property type="entry name" value="BAH1"/>
</dbReference>
<dbReference type="InterPro" id="IPR004331">
    <property type="entry name" value="SPX_dom"/>
</dbReference>
<dbReference type="InterPro" id="IPR027370">
    <property type="entry name" value="Znf-RING_euk"/>
</dbReference>
<dbReference type="InterPro" id="IPR001841">
    <property type="entry name" value="Znf_RING"/>
</dbReference>
<dbReference type="InterPro" id="IPR013083">
    <property type="entry name" value="Znf_RING/FYVE/PHD"/>
</dbReference>
<dbReference type="InterPro" id="IPR017907">
    <property type="entry name" value="Znf_RING_CS"/>
</dbReference>
<dbReference type="PANTHER" id="PTHR46764">
    <property type="entry name" value="E3 UBIQUITIN-PROTEIN LIGASE BAH1"/>
    <property type="match status" value="1"/>
</dbReference>
<dbReference type="PANTHER" id="PTHR46764:SF2">
    <property type="entry name" value="E3 UBIQUITIN-PROTEIN LIGASE BAH1-LIKE-RELATED"/>
    <property type="match status" value="1"/>
</dbReference>
<dbReference type="Pfam" id="PF13445">
    <property type="entry name" value="zf-RING_UBOX"/>
    <property type="match status" value="1"/>
</dbReference>
<dbReference type="SMART" id="SM00184">
    <property type="entry name" value="RING"/>
    <property type="match status" value="1"/>
</dbReference>
<dbReference type="SUPFAM" id="SSF57850">
    <property type="entry name" value="RING/U-box"/>
    <property type="match status" value="1"/>
</dbReference>
<dbReference type="PROSITE" id="PS51382">
    <property type="entry name" value="SPX"/>
    <property type="match status" value="1"/>
</dbReference>
<dbReference type="PROSITE" id="PS00518">
    <property type="entry name" value="ZF_RING_1"/>
    <property type="match status" value="1"/>
</dbReference>
<dbReference type="PROSITE" id="PS50089">
    <property type="entry name" value="ZF_RING_2"/>
    <property type="match status" value="1"/>
</dbReference>
<feature type="chain" id="PRO_0000398778" description="Probable E3 ubiquitin-protein ligase BAH1-like 1">
    <location>
        <begin position="1"/>
        <end position="339"/>
    </location>
</feature>
<feature type="domain" description="SPX" evidence="2">
    <location>
        <begin position="1"/>
        <end position="163"/>
    </location>
</feature>
<feature type="zinc finger region" description="RING-type" evidence="1">
    <location>
        <begin position="235"/>
        <end position="284"/>
    </location>
</feature>
<name>BAHL1_ORYSI</name>
<reference key="1">
    <citation type="journal article" date="2005" name="PLoS Biol.">
        <title>The genomes of Oryza sativa: a history of duplications.</title>
        <authorList>
            <person name="Yu J."/>
            <person name="Wang J."/>
            <person name="Lin W."/>
            <person name="Li S."/>
            <person name="Li H."/>
            <person name="Zhou J."/>
            <person name="Ni P."/>
            <person name="Dong W."/>
            <person name="Hu S."/>
            <person name="Zeng C."/>
            <person name="Zhang J."/>
            <person name="Zhang Y."/>
            <person name="Li R."/>
            <person name="Xu Z."/>
            <person name="Li S."/>
            <person name="Li X."/>
            <person name="Zheng H."/>
            <person name="Cong L."/>
            <person name="Lin L."/>
            <person name="Yin J."/>
            <person name="Geng J."/>
            <person name="Li G."/>
            <person name="Shi J."/>
            <person name="Liu J."/>
            <person name="Lv H."/>
            <person name="Li J."/>
            <person name="Wang J."/>
            <person name="Deng Y."/>
            <person name="Ran L."/>
            <person name="Shi X."/>
            <person name="Wang X."/>
            <person name="Wu Q."/>
            <person name="Li C."/>
            <person name="Ren X."/>
            <person name="Wang J."/>
            <person name="Wang X."/>
            <person name="Li D."/>
            <person name="Liu D."/>
            <person name="Zhang X."/>
            <person name="Ji Z."/>
            <person name="Zhao W."/>
            <person name="Sun Y."/>
            <person name="Zhang Z."/>
            <person name="Bao J."/>
            <person name="Han Y."/>
            <person name="Dong L."/>
            <person name="Ji J."/>
            <person name="Chen P."/>
            <person name="Wu S."/>
            <person name="Liu J."/>
            <person name="Xiao Y."/>
            <person name="Bu D."/>
            <person name="Tan J."/>
            <person name="Yang L."/>
            <person name="Ye C."/>
            <person name="Zhang J."/>
            <person name="Xu J."/>
            <person name="Zhou Y."/>
            <person name="Yu Y."/>
            <person name="Zhang B."/>
            <person name="Zhuang S."/>
            <person name="Wei H."/>
            <person name="Liu B."/>
            <person name="Lei M."/>
            <person name="Yu H."/>
            <person name="Li Y."/>
            <person name="Xu H."/>
            <person name="Wei S."/>
            <person name="He X."/>
            <person name="Fang L."/>
            <person name="Zhang Z."/>
            <person name="Zhang Y."/>
            <person name="Huang X."/>
            <person name="Su Z."/>
            <person name="Tong W."/>
            <person name="Li J."/>
            <person name="Tong Z."/>
            <person name="Li S."/>
            <person name="Ye J."/>
            <person name="Wang L."/>
            <person name="Fang L."/>
            <person name="Lei T."/>
            <person name="Chen C.-S."/>
            <person name="Chen H.-C."/>
            <person name="Xu Z."/>
            <person name="Li H."/>
            <person name="Huang H."/>
            <person name="Zhang F."/>
            <person name="Xu H."/>
            <person name="Li N."/>
            <person name="Zhao C."/>
            <person name="Li S."/>
            <person name="Dong L."/>
            <person name="Huang Y."/>
            <person name="Li L."/>
            <person name="Xi Y."/>
            <person name="Qi Q."/>
            <person name="Li W."/>
            <person name="Zhang B."/>
            <person name="Hu W."/>
            <person name="Zhang Y."/>
            <person name="Tian X."/>
            <person name="Jiao Y."/>
            <person name="Liang X."/>
            <person name="Jin J."/>
            <person name="Gao L."/>
            <person name="Zheng W."/>
            <person name="Hao B."/>
            <person name="Liu S.-M."/>
            <person name="Wang W."/>
            <person name="Yuan L."/>
            <person name="Cao M."/>
            <person name="McDermott J."/>
            <person name="Samudrala R."/>
            <person name="Wang J."/>
            <person name="Wong G.K.-S."/>
            <person name="Yang H."/>
        </authorList>
    </citation>
    <scope>NUCLEOTIDE SEQUENCE [LARGE SCALE GENOMIC DNA]</scope>
    <source>
        <strain>cv. 93-11</strain>
    </source>
</reference>
<proteinExistence type="inferred from homology"/>
<protein>
    <recommendedName>
        <fullName>Probable E3 ubiquitin-protein ligase BAH1-like 1</fullName>
        <ecNumber evidence="3">2.3.2.27</ecNumber>
    </recommendedName>
    <alternativeName>
        <fullName evidence="3">RING-type E3 ubiquitin transferase BAH1-like</fullName>
    </alternativeName>
</protein>
<gene>
    <name type="ORF">OsI_12825</name>
</gene>
<organism>
    <name type="scientific">Oryza sativa subsp. indica</name>
    <name type="common">Rice</name>
    <dbReference type="NCBI Taxonomy" id="39946"/>
    <lineage>
        <taxon>Eukaryota</taxon>
        <taxon>Viridiplantae</taxon>
        <taxon>Streptophyta</taxon>
        <taxon>Embryophyta</taxon>
        <taxon>Tracheophyta</taxon>
        <taxon>Spermatophyta</taxon>
        <taxon>Magnoliopsida</taxon>
        <taxon>Liliopsida</taxon>
        <taxon>Poales</taxon>
        <taxon>Poaceae</taxon>
        <taxon>BOP clade</taxon>
        <taxon>Oryzoideae</taxon>
        <taxon>Oryzeae</taxon>
        <taxon>Oryzinae</taxon>
        <taxon>Oryza</taxon>
        <taxon>Oryza sativa</taxon>
    </lineage>
</organism>
<sequence length="339" mass="39119">MKFGAIYEEYLREQQDKYLTKCSHVEYKRLKKVLKKCRVGRSLQEDCPNGDQQEGNNESPDICKCNSCTLCDQMFFTELTKEASEIAGCFSSRVQRLLNLHVPSGFLRYIWRVRQCFIDDQQIMVQEGRMLLNYVTMNAIAIRKILKKYDKIHGSVSGRDFKSKMQTDHIELLQSPWLIELGAFHLNCNSSDIDETVGFLKNEFFKNFSCDLTEARPLMTMAISETMKYEYSLTCPICLDTLFNPYALSCGHLFCKGCACGAASVYIFQGVKSAPPEAKCPVCRSDGVFAHAVHMTELDLLIKTRSKDYWRQRLREERNEMVKQSKEYWDSQAMLSMGI</sequence>
<accession>A2XK56</accession>
<keyword id="KW-0479">Metal-binding</keyword>
<keyword id="KW-1185">Reference proteome</keyword>
<keyword id="KW-0808">Transferase</keyword>
<keyword id="KW-0833">Ubl conjugation pathway</keyword>
<keyword id="KW-0862">Zinc</keyword>
<keyword id="KW-0863">Zinc-finger</keyword>
<evidence type="ECO:0000255" key="1">
    <source>
        <dbReference type="PROSITE-ProRule" id="PRU00175"/>
    </source>
</evidence>
<evidence type="ECO:0000255" key="2">
    <source>
        <dbReference type="PROSITE-ProRule" id="PRU00714"/>
    </source>
</evidence>
<evidence type="ECO:0000305" key="3"/>
<comment type="catalytic activity">
    <reaction evidence="3">
        <text>S-ubiquitinyl-[E2 ubiquitin-conjugating enzyme]-L-cysteine + [acceptor protein]-L-lysine = [E2 ubiquitin-conjugating enzyme]-L-cysteine + N(6)-ubiquitinyl-[acceptor protein]-L-lysine.</text>
        <dbReference type="EC" id="2.3.2.27"/>
    </reaction>
</comment>
<comment type="pathway">
    <text>Protein modification; protein ubiquitination.</text>
</comment>
<comment type="domain">
    <text>The RING-type zinc finger domain mediates binding to an E2 ubiquitin-conjugating enzyme.</text>
</comment>
<comment type="similarity">
    <text evidence="3">Belongs to the RING-type zinc finger family.</text>
</comment>